<dbReference type="EC" id="6.1.1.20" evidence="1"/>
<dbReference type="EMBL" id="CP000444">
    <property type="protein sequence ID" value="ABI43157.1"/>
    <property type="molecule type" value="Genomic_DNA"/>
</dbReference>
<dbReference type="SMR" id="Q0HUP8"/>
<dbReference type="KEGG" id="shm:Shewmr7_2169"/>
<dbReference type="HOGENOM" id="CLU_025086_0_1_6"/>
<dbReference type="GO" id="GO:0005737">
    <property type="term" value="C:cytoplasm"/>
    <property type="evidence" value="ECO:0007669"/>
    <property type="project" value="UniProtKB-SubCell"/>
</dbReference>
<dbReference type="GO" id="GO:0005524">
    <property type="term" value="F:ATP binding"/>
    <property type="evidence" value="ECO:0007669"/>
    <property type="project" value="UniProtKB-UniRule"/>
</dbReference>
<dbReference type="GO" id="GO:0000287">
    <property type="term" value="F:magnesium ion binding"/>
    <property type="evidence" value="ECO:0007669"/>
    <property type="project" value="UniProtKB-UniRule"/>
</dbReference>
<dbReference type="GO" id="GO:0004826">
    <property type="term" value="F:phenylalanine-tRNA ligase activity"/>
    <property type="evidence" value="ECO:0007669"/>
    <property type="project" value="UniProtKB-UniRule"/>
</dbReference>
<dbReference type="GO" id="GO:0000049">
    <property type="term" value="F:tRNA binding"/>
    <property type="evidence" value="ECO:0007669"/>
    <property type="project" value="InterPro"/>
</dbReference>
<dbReference type="GO" id="GO:0006432">
    <property type="term" value="P:phenylalanyl-tRNA aminoacylation"/>
    <property type="evidence" value="ECO:0007669"/>
    <property type="project" value="UniProtKB-UniRule"/>
</dbReference>
<dbReference type="CDD" id="cd00496">
    <property type="entry name" value="PheRS_alpha_core"/>
    <property type="match status" value="1"/>
</dbReference>
<dbReference type="FunFam" id="3.30.930.10:FF:000003">
    <property type="entry name" value="Phenylalanine--tRNA ligase alpha subunit"/>
    <property type="match status" value="1"/>
</dbReference>
<dbReference type="Gene3D" id="3.30.930.10">
    <property type="entry name" value="Bira Bifunctional Protein, Domain 2"/>
    <property type="match status" value="1"/>
</dbReference>
<dbReference type="HAMAP" id="MF_00281">
    <property type="entry name" value="Phe_tRNA_synth_alpha1"/>
    <property type="match status" value="1"/>
</dbReference>
<dbReference type="InterPro" id="IPR006195">
    <property type="entry name" value="aa-tRNA-synth_II"/>
</dbReference>
<dbReference type="InterPro" id="IPR045864">
    <property type="entry name" value="aa-tRNA-synth_II/BPL/LPL"/>
</dbReference>
<dbReference type="InterPro" id="IPR004529">
    <property type="entry name" value="Phe-tRNA-synth_IIc_asu"/>
</dbReference>
<dbReference type="InterPro" id="IPR004188">
    <property type="entry name" value="Phe-tRNA_ligase_II_N"/>
</dbReference>
<dbReference type="InterPro" id="IPR022911">
    <property type="entry name" value="Phe_tRNA_ligase_alpha1_bac"/>
</dbReference>
<dbReference type="InterPro" id="IPR002319">
    <property type="entry name" value="Phenylalanyl-tRNA_Synthase"/>
</dbReference>
<dbReference type="InterPro" id="IPR010978">
    <property type="entry name" value="tRNA-bd_arm"/>
</dbReference>
<dbReference type="NCBIfam" id="TIGR00468">
    <property type="entry name" value="pheS"/>
    <property type="match status" value="1"/>
</dbReference>
<dbReference type="PANTHER" id="PTHR11538:SF41">
    <property type="entry name" value="PHENYLALANINE--TRNA LIGASE, MITOCHONDRIAL"/>
    <property type="match status" value="1"/>
</dbReference>
<dbReference type="PANTHER" id="PTHR11538">
    <property type="entry name" value="PHENYLALANYL-TRNA SYNTHETASE"/>
    <property type="match status" value="1"/>
</dbReference>
<dbReference type="Pfam" id="PF02912">
    <property type="entry name" value="Phe_tRNA-synt_N"/>
    <property type="match status" value="1"/>
</dbReference>
<dbReference type="Pfam" id="PF01409">
    <property type="entry name" value="tRNA-synt_2d"/>
    <property type="match status" value="1"/>
</dbReference>
<dbReference type="SUPFAM" id="SSF55681">
    <property type="entry name" value="Class II aaRS and biotin synthetases"/>
    <property type="match status" value="1"/>
</dbReference>
<dbReference type="SUPFAM" id="SSF46589">
    <property type="entry name" value="tRNA-binding arm"/>
    <property type="match status" value="1"/>
</dbReference>
<dbReference type="PROSITE" id="PS50862">
    <property type="entry name" value="AA_TRNA_LIGASE_II"/>
    <property type="match status" value="1"/>
</dbReference>
<sequence>MQQLTEIVEQALVIIDQASDLKALDDIRVDYLGKKGKITDMMKMMGSLSPEEKPAFGQAVNDAKQAIQQKLTERIDGLKSAELEAKLIAEKIDVTLPGRTIDIGGLHPVTRTIERIETFFGELGFSVKQGPEIEDDFHNFDALNISEHHPARADHDTFYFNPKLMLRTQTSGVQIRTMETEKPPLRIISPGRVYRNDYDQTHTPMFHQVEGLLVDENVNFAELKGVLHDFLRNFFEEDLQVRFRPSYFPFTEPSAEVDVMGKNGKWLEVLGCGMVHPNVLRSVGIDPEKYSGFAFGMGVERLTMLRYGVNDLRAFFENDLRFLKQFK</sequence>
<organism>
    <name type="scientific">Shewanella sp. (strain MR-7)</name>
    <dbReference type="NCBI Taxonomy" id="60481"/>
    <lineage>
        <taxon>Bacteria</taxon>
        <taxon>Pseudomonadati</taxon>
        <taxon>Pseudomonadota</taxon>
        <taxon>Gammaproteobacteria</taxon>
        <taxon>Alteromonadales</taxon>
        <taxon>Shewanellaceae</taxon>
        <taxon>Shewanella</taxon>
    </lineage>
</organism>
<accession>Q0HUP8</accession>
<protein>
    <recommendedName>
        <fullName evidence="1">Phenylalanine--tRNA ligase alpha subunit</fullName>
        <ecNumber evidence="1">6.1.1.20</ecNumber>
    </recommendedName>
    <alternativeName>
        <fullName evidence="1">Phenylalanyl-tRNA synthetase alpha subunit</fullName>
        <shortName evidence="1">PheRS</shortName>
    </alternativeName>
</protein>
<name>SYFA_SHESR</name>
<reference key="1">
    <citation type="submission" date="2006-08" db="EMBL/GenBank/DDBJ databases">
        <title>Complete sequence of chromosome 1 of Shewanella sp. MR-7.</title>
        <authorList>
            <person name="Copeland A."/>
            <person name="Lucas S."/>
            <person name="Lapidus A."/>
            <person name="Barry K."/>
            <person name="Detter J.C."/>
            <person name="Glavina del Rio T."/>
            <person name="Hammon N."/>
            <person name="Israni S."/>
            <person name="Dalin E."/>
            <person name="Tice H."/>
            <person name="Pitluck S."/>
            <person name="Kiss H."/>
            <person name="Brettin T."/>
            <person name="Bruce D."/>
            <person name="Han C."/>
            <person name="Tapia R."/>
            <person name="Gilna P."/>
            <person name="Schmutz J."/>
            <person name="Larimer F."/>
            <person name="Land M."/>
            <person name="Hauser L."/>
            <person name="Kyrpides N."/>
            <person name="Mikhailova N."/>
            <person name="Nealson K."/>
            <person name="Konstantinidis K."/>
            <person name="Klappenbach J."/>
            <person name="Tiedje J."/>
            <person name="Richardson P."/>
        </authorList>
    </citation>
    <scope>NUCLEOTIDE SEQUENCE [LARGE SCALE GENOMIC DNA]</scope>
    <source>
        <strain>MR-7</strain>
    </source>
</reference>
<evidence type="ECO:0000255" key="1">
    <source>
        <dbReference type="HAMAP-Rule" id="MF_00281"/>
    </source>
</evidence>
<keyword id="KW-0030">Aminoacyl-tRNA synthetase</keyword>
<keyword id="KW-0067">ATP-binding</keyword>
<keyword id="KW-0963">Cytoplasm</keyword>
<keyword id="KW-0436">Ligase</keyword>
<keyword id="KW-0460">Magnesium</keyword>
<keyword id="KW-0479">Metal-binding</keyword>
<keyword id="KW-0547">Nucleotide-binding</keyword>
<keyword id="KW-0648">Protein biosynthesis</keyword>
<proteinExistence type="inferred from homology"/>
<feature type="chain" id="PRO_1000006898" description="Phenylalanine--tRNA ligase alpha subunit">
    <location>
        <begin position="1"/>
        <end position="327"/>
    </location>
</feature>
<feature type="binding site" evidence="1">
    <location>
        <position position="252"/>
    </location>
    <ligand>
        <name>Mg(2+)</name>
        <dbReference type="ChEBI" id="CHEBI:18420"/>
        <note>shared with beta subunit</note>
    </ligand>
</feature>
<comment type="catalytic activity">
    <reaction evidence="1">
        <text>tRNA(Phe) + L-phenylalanine + ATP = L-phenylalanyl-tRNA(Phe) + AMP + diphosphate + H(+)</text>
        <dbReference type="Rhea" id="RHEA:19413"/>
        <dbReference type="Rhea" id="RHEA-COMP:9668"/>
        <dbReference type="Rhea" id="RHEA-COMP:9699"/>
        <dbReference type="ChEBI" id="CHEBI:15378"/>
        <dbReference type="ChEBI" id="CHEBI:30616"/>
        <dbReference type="ChEBI" id="CHEBI:33019"/>
        <dbReference type="ChEBI" id="CHEBI:58095"/>
        <dbReference type="ChEBI" id="CHEBI:78442"/>
        <dbReference type="ChEBI" id="CHEBI:78531"/>
        <dbReference type="ChEBI" id="CHEBI:456215"/>
        <dbReference type="EC" id="6.1.1.20"/>
    </reaction>
</comment>
<comment type="cofactor">
    <cofactor evidence="1">
        <name>Mg(2+)</name>
        <dbReference type="ChEBI" id="CHEBI:18420"/>
    </cofactor>
    <text evidence="1">Binds 2 magnesium ions per tetramer.</text>
</comment>
<comment type="subunit">
    <text evidence="1">Tetramer of two alpha and two beta subunits.</text>
</comment>
<comment type="subcellular location">
    <subcellularLocation>
        <location evidence="1">Cytoplasm</location>
    </subcellularLocation>
</comment>
<comment type="similarity">
    <text evidence="1">Belongs to the class-II aminoacyl-tRNA synthetase family. Phe-tRNA synthetase alpha subunit type 1 subfamily.</text>
</comment>
<gene>
    <name evidence="1" type="primary">pheS</name>
    <name type="ordered locus">Shewmr7_2169</name>
</gene>